<organism>
    <name type="scientific">Salmonella agona (strain SL483)</name>
    <dbReference type="NCBI Taxonomy" id="454166"/>
    <lineage>
        <taxon>Bacteria</taxon>
        <taxon>Pseudomonadati</taxon>
        <taxon>Pseudomonadota</taxon>
        <taxon>Gammaproteobacteria</taxon>
        <taxon>Enterobacterales</taxon>
        <taxon>Enterobacteriaceae</taxon>
        <taxon>Salmonella</taxon>
    </lineage>
</organism>
<keyword id="KW-0997">Cell inner membrane</keyword>
<keyword id="KW-1003">Cell membrane</keyword>
<keyword id="KW-0328">Glycosyltransferase</keyword>
<keyword id="KW-0460">Magnesium</keyword>
<keyword id="KW-0472">Membrane</keyword>
<keyword id="KW-0479">Metal-binding</keyword>
<keyword id="KW-0660">Purine salvage</keyword>
<keyword id="KW-0808">Transferase</keyword>
<accession>B5EWK0</accession>
<feature type="chain" id="PRO_1000188752" description="Xanthine-guanine phosphoribosyltransferase">
    <location>
        <begin position="1"/>
        <end position="152"/>
    </location>
</feature>
<feature type="binding site" evidence="1">
    <location>
        <begin position="37"/>
        <end position="38"/>
    </location>
    <ligand>
        <name>5-phospho-alpha-D-ribose 1-diphosphate</name>
        <dbReference type="ChEBI" id="CHEBI:58017"/>
    </ligand>
</feature>
<feature type="binding site" evidence="1">
    <location>
        <position position="69"/>
    </location>
    <ligand>
        <name>5-phospho-alpha-D-ribose 1-diphosphate</name>
        <dbReference type="ChEBI" id="CHEBI:58017"/>
    </ligand>
</feature>
<feature type="binding site" evidence="1">
    <location>
        <position position="69"/>
    </location>
    <ligand>
        <name>GMP</name>
        <dbReference type="ChEBI" id="CHEBI:58115"/>
    </ligand>
</feature>
<feature type="binding site" evidence="1">
    <location>
        <begin position="88"/>
        <end position="96"/>
    </location>
    <ligand>
        <name>5-phospho-alpha-D-ribose 1-diphosphate</name>
        <dbReference type="ChEBI" id="CHEBI:58017"/>
    </ligand>
</feature>
<feature type="binding site" evidence="1">
    <location>
        <position position="89"/>
    </location>
    <ligand>
        <name>Mg(2+)</name>
        <dbReference type="ChEBI" id="CHEBI:18420"/>
    </ligand>
</feature>
<feature type="binding site" evidence="1">
    <location>
        <begin position="92"/>
        <end position="96"/>
    </location>
    <ligand>
        <name>GMP</name>
        <dbReference type="ChEBI" id="CHEBI:58115"/>
    </ligand>
</feature>
<feature type="binding site" evidence="1">
    <location>
        <position position="92"/>
    </location>
    <ligand>
        <name>guanine</name>
        <dbReference type="ChEBI" id="CHEBI:16235"/>
    </ligand>
</feature>
<feature type="binding site" evidence="1">
    <location>
        <position position="92"/>
    </location>
    <ligand>
        <name>xanthine</name>
        <dbReference type="ChEBI" id="CHEBI:17712"/>
    </ligand>
</feature>
<feature type="binding site" evidence="1">
    <location>
        <begin position="134"/>
        <end position="135"/>
    </location>
    <ligand>
        <name>GMP</name>
        <dbReference type="ChEBI" id="CHEBI:58115"/>
    </ligand>
</feature>
<feature type="binding site" evidence="1">
    <location>
        <position position="135"/>
    </location>
    <ligand>
        <name>guanine</name>
        <dbReference type="ChEBI" id="CHEBI:16235"/>
    </ligand>
</feature>
<feature type="binding site" evidence="1">
    <location>
        <position position="135"/>
    </location>
    <ligand>
        <name>xanthine</name>
        <dbReference type="ChEBI" id="CHEBI:17712"/>
    </ligand>
</feature>
<evidence type="ECO:0000255" key="1">
    <source>
        <dbReference type="HAMAP-Rule" id="MF_01903"/>
    </source>
</evidence>
<gene>
    <name evidence="1" type="primary">gpt</name>
    <name type="ordered locus">SeAg_B0351</name>
</gene>
<sequence>MSEKYVVTWDMLQIHARKLASRLMPSEQWKGIIAVSRGGLVPGALLARELGIRHVDTVCISSYDHDNQRELKVLKRAEGDGEGFIVIDDLVDTGGTAVAIREMYPKAHFVTIFAKPAGRPLVDDYVIDIPQNTWIEQPWDMGVVFVPPISGR</sequence>
<name>XGPT_SALA4</name>
<protein>
    <recommendedName>
        <fullName evidence="1">Xanthine-guanine phosphoribosyltransferase</fullName>
        <shortName evidence="1">XGPRT</shortName>
        <ecNumber evidence="1">2.4.2.-</ecNumber>
        <ecNumber evidence="1">2.4.2.22</ecNumber>
    </recommendedName>
    <alternativeName>
        <fullName evidence="1">Xanthine phosphoribosyltransferase</fullName>
    </alternativeName>
</protein>
<reference key="1">
    <citation type="journal article" date="2011" name="J. Bacteriol.">
        <title>Comparative genomics of 28 Salmonella enterica isolates: evidence for CRISPR-mediated adaptive sublineage evolution.</title>
        <authorList>
            <person name="Fricke W.F."/>
            <person name="Mammel M.K."/>
            <person name="McDermott P.F."/>
            <person name="Tartera C."/>
            <person name="White D.G."/>
            <person name="Leclerc J.E."/>
            <person name="Ravel J."/>
            <person name="Cebula T.A."/>
        </authorList>
    </citation>
    <scope>NUCLEOTIDE SEQUENCE [LARGE SCALE GENOMIC DNA]</scope>
    <source>
        <strain>SL483</strain>
    </source>
</reference>
<comment type="function">
    <text evidence="1">Purine salvage pathway enzyme that catalyzes the transfer of the ribosyl-5-phosphate group from 5-phospho-alpha-D-ribose 1-diphosphate (PRPP) to the N9 position of the 6-oxopurines guanine and xanthine to form the corresponding ribonucleotides GMP (guanosine 5'-monophosphate) and XMP (xanthosine 5'-monophosphate), with the release of PPi. To a lesser extent, also acts on hypoxanthine.</text>
</comment>
<comment type="catalytic activity">
    <reaction evidence="1">
        <text>GMP + diphosphate = guanine + 5-phospho-alpha-D-ribose 1-diphosphate</text>
        <dbReference type="Rhea" id="RHEA:25424"/>
        <dbReference type="ChEBI" id="CHEBI:16235"/>
        <dbReference type="ChEBI" id="CHEBI:33019"/>
        <dbReference type="ChEBI" id="CHEBI:58017"/>
        <dbReference type="ChEBI" id="CHEBI:58115"/>
    </reaction>
    <physiologicalReaction direction="right-to-left" evidence="1">
        <dbReference type="Rhea" id="RHEA:25426"/>
    </physiologicalReaction>
</comment>
<comment type="catalytic activity">
    <reaction evidence="1">
        <text>XMP + diphosphate = xanthine + 5-phospho-alpha-D-ribose 1-diphosphate</text>
        <dbReference type="Rhea" id="RHEA:10800"/>
        <dbReference type="ChEBI" id="CHEBI:17712"/>
        <dbReference type="ChEBI" id="CHEBI:33019"/>
        <dbReference type="ChEBI" id="CHEBI:57464"/>
        <dbReference type="ChEBI" id="CHEBI:58017"/>
        <dbReference type="EC" id="2.4.2.22"/>
    </reaction>
    <physiologicalReaction direction="right-to-left" evidence="1">
        <dbReference type="Rhea" id="RHEA:10802"/>
    </physiologicalReaction>
</comment>
<comment type="catalytic activity">
    <reaction evidence="1">
        <text>IMP + diphosphate = hypoxanthine + 5-phospho-alpha-D-ribose 1-diphosphate</text>
        <dbReference type="Rhea" id="RHEA:17973"/>
        <dbReference type="ChEBI" id="CHEBI:17368"/>
        <dbReference type="ChEBI" id="CHEBI:33019"/>
        <dbReference type="ChEBI" id="CHEBI:58017"/>
        <dbReference type="ChEBI" id="CHEBI:58053"/>
    </reaction>
    <physiologicalReaction direction="right-to-left" evidence="1">
        <dbReference type="Rhea" id="RHEA:17975"/>
    </physiologicalReaction>
</comment>
<comment type="cofactor">
    <cofactor evidence="1">
        <name>Mg(2+)</name>
        <dbReference type="ChEBI" id="CHEBI:18420"/>
    </cofactor>
</comment>
<comment type="pathway">
    <text evidence="1">Purine metabolism; GMP biosynthesis via salvage pathway; GMP from guanine: step 1/1.</text>
</comment>
<comment type="pathway">
    <text evidence="1">Purine metabolism; XMP biosynthesis via salvage pathway; XMP from xanthine: step 1/1.</text>
</comment>
<comment type="subunit">
    <text evidence="1">Homotetramer.</text>
</comment>
<comment type="subcellular location">
    <subcellularLocation>
        <location evidence="1">Cell inner membrane</location>
        <topology evidence="1">Peripheral membrane protein</topology>
    </subcellularLocation>
</comment>
<comment type="similarity">
    <text evidence="1">Belongs to the purine/pyrimidine phosphoribosyltransferase family. XGPT subfamily.</text>
</comment>
<dbReference type="EC" id="2.4.2.-" evidence="1"/>
<dbReference type="EC" id="2.4.2.22" evidence="1"/>
<dbReference type="EMBL" id="CP001138">
    <property type="protein sequence ID" value="ACH50107.1"/>
    <property type="molecule type" value="Genomic_DNA"/>
</dbReference>
<dbReference type="RefSeq" id="WP_001292018.1">
    <property type="nucleotide sequence ID" value="NC_011149.1"/>
</dbReference>
<dbReference type="SMR" id="B5EWK0"/>
<dbReference type="GeneID" id="66754798"/>
<dbReference type="KEGG" id="sea:SeAg_B0351"/>
<dbReference type="HOGENOM" id="CLU_080904_3_0_6"/>
<dbReference type="UniPathway" id="UPA00602">
    <property type="reaction ID" value="UER00658"/>
</dbReference>
<dbReference type="UniPathway" id="UPA00909">
    <property type="reaction ID" value="UER00887"/>
</dbReference>
<dbReference type="Proteomes" id="UP000008819">
    <property type="component" value="Chromosome"/>
</dbReference>
<dbReference type="GO" id="GO:0005829">
    <property type="term" value="C:cytosol"/>
    <property type="evidence" value="ECO:0007669"/>
    <property type="project" value="TreeGrafter"/>
</dbReference>
<dbReference type="GO" id="GO:0005886">
    <property type="term" value="C:plasma membrane"/>
    <property type="evidence" value="ECO:0007669"/>
    <property type="project" value="UniProtKB-SubCell"/>
</dbReference>
<dbReference type="GO" id="GO:0052657">
    <property type="term" value="F:guanine phosphoribosyltransferase activity"/>
    <property type="evidence" value="ECO:0007669"/>
    <property type="project" value="RHEA"/>
</dbReference>
<dbReference type="GO" id="GO:0004422">
    <property type="term" value="F:hypoxanthine phosphoribosyltransferase activity"/>
    <property type="evidence" value="ECO:0007669"/>
    <property type="project" value="RHEA"/>
</dbReference>
<dbReference type="GO" id="GO:0000287">
    <property type="term" value="F:magnesium ion binding"/>
    <property type="evidence" value="ECO:0007669"/>
    <property type="project" value="UniProtKB-UniRule"/>
</dbReference>
<dbReference type="GO" id="GO:0000310">
    <property type="term" value="F:xanthine phosphoribosyltransferase activity"/>
    <property type="evidence" value="ECO:0007669"/>
    <property type="project" value="UniProtKB-UniRule"/>
</dbReference>
<dbReference type="GO" id="GO:0032263">
    <property type="term" value="P:GMP salvage"/>
    <property type="evidence" value="ECO:0007669"/>
    <property type="project" value="UniProtKB-UniRule"/>
</dbReference>
<dbReference type="GO" id="GO:0032264">
    <property type="term" value="P:IMP salvage"/>
    <property type="evidence" value="ECO:0007669"/>
    <property type="project" value="TreeGrafter"/>
</dbReference>
<dbReference type="GO" id="GO:0006166">
    <property type="term" value="P:purine ribonucleoside salvage"/>
    <property type="evidence" value="ECO:0007669"/>
    <property type="project" value="UniProtKB-KW"/>
</dbReference>
<dbReference type="GO" id="GO:0032265">
    <property type="term" value="P:XMP salvage"/>
    <property type="evidence" value="ECO:0007669"/>
    <property type="project" value="UniProtKB-UniRule"/>
</dbReference>
<dbReference type="CDD" id="cd06223">
    <property type="entry name" value="PRTases_typeI"/>
    <property type="match status" value="1"/>
</dbReference>
<dbReference type="FunFam" id="3.40.50.2020:FF:000009">
    <property type="entry name" value="Xanthine phosphoribosyltransferase"/>
    <property type="match status" value="1"/>
</dbReference>
<dbReference type="Gene3D" id="3.40.50.2020">
    <property type="match status" value="1"/>
</dbReference>
<dbReference type="HAMAP" id="MF_01903">
    <property type="entry name" value="XGPRT"/>
    <property type="match status" value="1"/>
</dbReference>
<dbReference type="InterPro" id="IPR000836">
    <property type="entry name" value="PRibTrfase_dom"/>
</dbReference>
<dbReference type="InterPro" id="IPR029057">
    <property type="entry name" value="PRTase-like"/>
</dbReference>
<dbReference type="InterPro" id="IPR023747">
    <property type="entry name" value="Xanthine_Guanine_PRibTrfase"/>
</dbReference>
<dbReference type="NCBIfam" id="NF006613">
    <property type="entry name" value="PRK09177.1"/>
    <property type="match status" value="1"/>
</dbReference>
<dbReference type="PANTHER" id="PTHR39563">
    <property type="entry name" value="XANTHINE PHOSPHORIBOSYLTRANSFERASE"/>
    <property type="match status" value="1"/>
</dbReference>
<dbReference type="PANTHER" id="PTHR39563:SF1">
    <property type="entry name" value="XANTHINE-GUANINE PHOSPHORIBOSYLTRANSFERASE"/>
    <property type="match status" value="1"/>
</dbReference>
<dbReference type="Pfam" id="PF00156">
    <property type="entry name" value="Pribosyltran"/>
    <property type="match status" value="1"/>
</dbReference>
<dbReference type="SUPFAM" id="SSF53271">
    <property type="entry name" value="PRTase-like"/>
    <property type="match status" value="1"/>
</dbReference>
<dbReference type="PROSITE" id="PS00103">
    <property type="entry name" value="PUR_PYR_PR_TRANSFER"/>
    <property type="match status" value="1"/>
</dbReference>
<proteinExistence type="inferred from homology"/>